<keyword id="KW-0240">DNA-directed RNA polymerase</keyword>
<keyword id="KW-0548">Nucleotidyltransferase</keyword>
<keyword id="KW-0804">Transcription</keyword>
<keyword id="KW-0808">Transferase</keyword>
<comment type="function">
    <text evidence="1">Promotes RNA polymerase assembly. Latches the N- and C-terminal regions of the beta' subunit thereby facilitating its interaction with the beta and alpha subunits.</text>
</comment>
<comment type="catalytic activity">
    <reaction evidence="1">
        <text>RNA(n) + a ribonucleoside 5'-triphosphate = RNA(n+1) + diphosphate</text>
        <dbReference type="Rhea" id="RHEA:21248"/>
        <dbReference type="Rhea" id="RHEA-COMP:14527"/>
        <dbReference type="Rhea" id="RHEA-COMP:17342"/>
        <dbReference type="ChEBI" id="CHEBI:33019"/>
        <dbReference type="ChEBI" id="CHEBI:61557"/>
        <dbReference type="ChEBI" id="CHEBI:140395"/>
        <dbReference type="EC" id="2.7.7.6"/>
    </reaction>
</comment>
<comment type="subunit">
    <text evidence="1">The RNAP catalytic core consists of 2 alpha, 1 beta, 1 beta' and 1 omega subunit. When a sigma factor is associated with the core the holoenzyme is formed, which can initiate transcription.</text>
</comment>
<comment type="similarity">
    <text evidence="1">Belongs to the RNA polymerase subunit omega family.</text>
</comment>
<gene>
    <name evidence="1" type="primary">rpoZ</name>
    <name type="ordered locus">SEQ_1779</name>
</gene>
<dbReference type="EC" id="2.7.7.6" evidence="1"/>
<dbReference type="EMBL" id="FM204883">
    <property type="protein sequence ID" value="CAW94894.1"/>
    <property type="molecule type" value="Genomic_DNA"/>
</dbReference>
<dbReference type="RefSeq" id="WP_012679999.1">
    <property type="nucleotide sequence ID" value="NC_012471.1"/>
</dbReference>
<dbReference type="SMR" id="C0M782"/>
<dbReference type="KEGG" id="seu:SEQ_1779"/>
<dbReference type="HOGENOM" id="CLU_125406_0_0_9"/>
<dbReference type="OrthoDB" id="9815459at2"/>
<dbReference type="Proteomes" id="UP000001365">
    <property type="component" value="Chromosome"/>
</dbReference>
<dbReference type="GO" id="GO:0000428">
    <property type="term" value="C:DNA-directed RNA polymerase complex"/>
    <property type="evidence" value="ECO:0007669"/>
    <property type="project" value="UniProtKB-KW"/>
</dbReference>
<dbReference type="GO" id="GO:0003677">
    <property type="term" value="F:DNA binding"/>
    <property type="evidence" value="ECO:0007669"/>
    <property type="project" value="UniProtKB-UniRule"/>
</dbReference>
<dbReference type="GO" id="GO:0003899">
    <property type="term" value="F:DNA-directed RNA polymerase activity"/>
    <property type="evidence" value="ECO:0007669"/>
    <property type="project" value="UniProtKB-UniRule"/>
</dbReference>
<dbReference type="GO" id="GO:0006351">
    <property type="term" value="P:DNA-templated transcription"/>
    <property type="evidence" value="ECO:0007669"/>
    <property type="project" value="UniProtKB-UniRule"/>
</dbReference>
<dbReference type="Gene3D" id="3.90.940.10">
    <property type="match status" value="1"/>
</dbReference>
<dbReference type="HAMAP" id="MF_00366">
    <property type="entry name" value="RNApol_bact_RpoZ"/>
    <property type="match status" value="1"/>
</dbReference>
<dbReference type="InterPro" id="IPR003716">
    <property type="entry name" value="DNA-dir_RNA_pol_omega"/>
</dbReference>
<dbReference type="InterPro" id="IPR006110">
    <property type="entry name" value="Pol_omega/Rpo6/RPB6"/>
</dbReference>
<dbReference type="InterPro" id="IPR036161">
    <property type="entry name" value="RPB6/omega-like_sf"/>
</dbReference>
<dbReference type="NCBIfam" id="TIGR00690">
    <property type="entry name" value="rpoZ"/>
    <property type="match status" value="1"/>
</dbReference>
<dbReference type="PANTHER" id="PTHR34476">
    <property type="entry name" value="DNA-DIRECTED RNA POLYMERASE SUBUNIT OMEGA"/>
    <property type="match status" value="1"/>
</dbReference>
<dbReference type="PANTHER" id="PTHR34476:SF1">
    <property type="entry name" value="DNA-DIRECTED RNA POLYMERASE SUBUNIT OMEGA"/>
    <property type="match status" value="1"/>
</dbReference>
<dbReference type="Pfam" id="PF01192">
    <property type="entry name" value="RNA_pol_Rpb6"/>
    <property type="match status" value="1"/>
</dbReference>
<dbReference type="SMART" id="SM01409">
    <property type="entry name" value="RNA_pol_Rpb6"/>
    <property type="match status" value="1"/>
</dbReference>
<dbReference type="SUPFAM" id="SSF63562">
    <property type="entry name" value="RPB6/omega subunit-like"/>
    <property type="match status" value="1"/>
</dbReference>
<name>RPOZ_STRE4</name>
<evidence type="ECO:0000255" key="1">
    <source>
        <dbReference type="HAMAP-Rule" id="MF_00366"/>
    </source>
</evidence>
<proteinExistence type="inferred from homology"/>
<reference key="1">
    <citation type="journal article" date="2009" name="PLoS Pathog.">
        <title>Genomic evidence for the evolution of Streptococcus equi: host restriction, increased virulence, and genetic exchange with human pathogens.</title>
        <authorList>
            <person name="Holden M.T.G."/>
            <person name="Heather Z."/>
            <person name="Paillot R."/>
            <person name="Steward K.F."/>
            <person name="Webb K."/>
            <person name="Ainslie F."/>
            <person name="Jourdan T."/>
            <person name="Bason N.C."/>
            <person name="Holroyd N.E."/>
            <person name="Mungall K."/>
            <person name="Quail M.A."/>
            <person name="Sanders M."/>
            <person name="Simmonds M."/>
            <person name="Willey D."/>
            <person name="Brooks K."/>
            <person name="Aanensen D.M."/>
            <person name="Spratt B.G."/>
            <person name="Jolley K.A."/>
            <person name="Maiden M.C.J."/>
            <person name="Kehoe M."/>
            <person name="Chanter N."/>
            <person name="Bentley S.D."/>
            <person name="Robinson C."/>
            <person name="Maskell D.J."/>
            <person name="Parkhill J."/>
            <person name="Waller A.S."/>
        </authorList>
    </citation>
    <scope>NUCLEOTIDE SEQUENCE [LARGE SCALE GENOMIC DNA]</scope>
    <source>
        <strain>4047</strain>
    </source>
</reference>
<feature type="chain" id="PRO_1000194812" description="DNA-directed RNA polymerase subunit omega">
    <location>
        <begin position="1"/>
        <end position="105"/>
    </location>
</feature>
<sequence length="105" mass="11761">MMLKPSIDTLLDKVPSKYSLVILQAKRAHELEAGAAPTQSFKSVKSTLQALEEIESGNVVIHPDPAAKRAAIRARIEAERLAREEEERKIKEQIAKEKEEEGEKI</sequence>
<accession>C0M782</accession>
<protein>
    <recommendedName>
        <fullName evidence="1">DNA-directed RNA polymerase subunit omega</fullName>
        <shortName evidence="1">RNAP omega subunit</shortName>
        <ecNumber evidence="1">2.7.7.6</ecNumber>
    </recommendedName>
    <alternativeName>
        <fullName evidence="1">RNA polymerase omega subunit</fullName>
    </alternativeName>
    <alternativeName>
        <fullName evidence="1">Transcriptase subunit omega</fullName>
    </alternativeName>
</protein>
<organism>
    <name type="scientific">Streptococcus equi subsp. equi (strain 4047)</name>
    <dbReference type="NCBI Taxonomy" id="553482"/>
    <lineage>
        <taxon>Bacteria</taxon>
        <taxon>Bacillati</taxon>
        <taxon>Bacillota</taxon>
        <taxon>Bacilli</taxon>
        <taxon>Lactobacillales</taxon>
        <taxon>Streptococcaceae</taxon>
        <taxon>Streptococcus</taxon>
    </lineage>
</organism>